<sequence length="563" mass="62980">MTTLLSFLTSLCSAAIHQAFPELEELTLDITPSTKEHFGHYQCNDAMKLARVLHKSPRAIAESIVAHIPPTPFSSIEIAGAGFINFTFSKEFLASQLQTFSKELANGFRAASPQKVIIDFSSPNIAKDMHVGHLRSTIIGDCLARCFSFVGHDVLRLNHIGDWGTAFGMLITYLQETSQEAIHQLEDLTALYKKAHARFAEDSEFKKRSQHNVVALQSGDAQALALWKQICSVSEKSFQTIYSILDVELHTRGESFYNPFLAEVVADLESKNLVTLSDGAKCVFHEAFSIPLMIQKSDGGYNYATTDVAAMRYRIQQDQADRILIVTDSGQSLHFQLLEATCLAAGYLPSKGIFSHVGFGLVLDTQGRKFKTRSGENIKLRELLDTAVEKAKESLKAHRPDISEEELAYQGPILGINAIKYADLSSHRINDYVFSFEKMLRFEGNTAMSLLYAYVRIQGIKRRMGLESPPQEGPLAVHEPAEEALALTLLRFPEILDLTLRELCPHFLTDYLYALTNKFNAFFRDCHIEGSDSQQERLYLCGLTERTLSTGMHLLGLKTLNHL</sequence>
<organism>
    <name type="scientific">Chlamydia trachomatis serovar D (strain ATCC VR-885 / DSM 19411 / UW-3/Cx)</name>
    <dbReference type="NCBI Taxonomy" id="272561"/>
    <lineage>
        <taxon>Bacteria</taxon>
        <taxon>Pseudomonadati</taxon>
        <taxon>Chlamydiota</taxon>
        <taxon>Chlamydiia</taxon>
        <taxon>Chlamydiales</taxon>
        <taxon>Chlamydiaceae</taxon>
        <taxon>Chlamydia/Chlamydophila group</taxon>
        <taxon>Chlamydia</taxon>
    </lineage>
</organism>
<accession>O84460</accession>
<evidence type="ECO:0000250" key="1"/>
<evidence type="ECO:0000305" key="2"/>
<keyword id="KW-0030">Aminoacyl-tRNA synthetase</keyword>
<keyword id="KW-0067">ATP-binding</keyword>
<keyword id="KW-0963">Cytoplasm</keyword>
<keyword id="KW-0436">Ligase</keyword>
<keyword id="KW-0547">Nucleotide-binding</keyword>
<keyword id="KW-0648">Protein biosynthesis</keyword>
<keyword id="KW-1185">Reference proteome</keyword>
<dbReference type="EC" id="6.1.1.19"/>
<dbReference type="EMBL" id="AE001273">
    <property type="protein sequence ID" value="AAC68054.1"/>
    <property type="molecule type" value="Genomic_DNA"/>
</dbReference>
<dbReference type="EMBL" id="AF087268">
    <property type="protein sequence ID" value="AAD04046.1"/>
    <property type="molecule type" value="Genomic_DNA"/>
</dbReference>
<dbReference type="PIR" id="A71513">
    <property type="entry name" value="A71513"/>
</dbReference>
<dbReference type="RefSeq" id="NP_219967.1">
    <property type="nucleotide sequence ID" value="NC_000117.1"/>
</dbReference>
<dbReference type="RefSeq" id="WP_009871812.1">
    <property type="nucleotide sequence ID" value="NC_000117.1"/>
</dbReference>
<dbReference type="SMR" id="O84460"/>
<dbReference type="FunCoup" id="O84460">
    <property type="interactions" value="240"/>
</dbReference>
<dbReference type="STRING" id="272561.CT_454"/>
<dbReference type="EnsemblBacteria" id="AAC68054">
    <property type="protein sequence ID" value="AAC68054"/>
    <property type="gene ID" value="CT_454"/>
</dbReference>
<dbReference type="GeneID" id="884196"/>
<dbReference type="KEGG" id="ctr:CT_454"/>
<dbReference type="PATRIC" id="fig|272561.5.peg.491"/>
<dbReference type="HOGENOM" id="CLU_006406_5_1_0"/>
<dbReference type="InParanoid" id="O84460"/>
<dbReference type="OrthoDB" id="9805987at2"/>
<dbReference type="Proteomes" id="UP000000431">
    <property type="component" value="Chromosome"/>
</dbReference>
<dbReference type="GO" id="GO:0005737">
    <property type="term" value="C:cytoplasm"/>
    <property type="evidence" value="ECO:0007669"/>
    <property type="project" value="UniProtKB-SubCell"/>
</dbReference>
<dbReference type="GO" id="GO:0004814">
    <property type="term" value="F:arginine-tRNA ligase activity"/>
    <property type="evidence" value="ECO:0000318"/>
    <property type="project" value="GO_Central"/>
</dbReference>
<dbReference type="GO" id="GO:0005524">
    <property type="term" value="F:ATP binding"/>
    <property type="evidence" value="ECO:0007669"/>
    <property type="project" value="UniProtKB-UniRule"/>
</dbReference>
<dbReference type="GO" id="GO:0006420">
    <property type="term" value="P:arginyl-tRNA aminoacylation"/>
    <property type="evidence" value="ECO:0000318"/>
    <property type="project" value="GO_Central"/>
</dbReference>
<dbReference type="CDD" id="cd00671">
    <property type="entry name" value="ArgRS_core"/>
    <property type="match status" value="1"/>
</dbReference>
<dbReference type="FunFam" id="3.40.50.620:FF:000030">
    <property type="entry name" value="Arginine--tRNA ligase"/>
    <property type="match status" value="1"/>
</dbReference>
<dbReference type="FunFam" id="3.30.1360.70:FF:000002">
    <property type="entry name" value="arginine--tRNA ligase, cytoplasmic"/>
    <property type="match status" value="1"/>
</dbReference>
<dbReference type="FunFam" id="1.10.730.10:FF:000006">
    <property type="entry name" value="Arginyl-tRNA synthetase 2, mitochondrial"/>
    <property type="match status" value="1"/>
</dbReference>
<dbReference type="Gene3D" id="3.30.1360.70">
    <property type="entry name" value="Arginyl tRNA synthetase N-terminal domain"/>
    <property type="match status" value="1"/>
</dbReference>
<dbReference type="Gene3D" id="3.40.50.620">
    <property type="entry name" value="HUPs"/>
    <property type="match status" value="1"/>
</dbReference>
<dbReference type="Gene3D" id="1.10.730.10">
    <property type="entry name" value="Isoleucyl-tRNA Synthetase, Domain 1"/>
    <property type="match status" value="1"/>
</dbReference>
<dbReference type="HAMAP" id="MF_00123">
    <property type="entry name" value="Arg_tRNA_synth"/>
    <property type="match status" value="1"/>
</dbReference>
<dbReference type="InterPro" id="IPR001412">
    <property type="entry name" value="aa-tRNA-synth_I_CS"/>
</dbReference>
<dbReference type="InterPro" id="IPR001278">
    <property type="entry name" value="Arg-tRNA-ligase"/>
</dbReference>
<dbReference type="InterPro" id="IPR005148">
    <property type="entry name" value="Arg-tRNA-synth_N"/>
</dbReference>
<dbReference type="InterPro" id="IPR036695">
    <property type="entry name" value="Arg-tRNA-synth_N_sf"/>
</dbReference>
<dbReference type="InterPro" id="IPR035684">
    <property type="entry name" value="ArgRS_core"/>
</dbReference>
<dbReference type="InterPro" id="IPR008909">
    <property type="entry name" value="DALR_anticod-bd"/>
</dbReference>
<dbReference type="InterPro" id="IPR014729">
    <property type="entry name" value="Rossmann-like_a/b/a_fold"/>
</dbReference>
<dbReference type="InterPro" id="IPR009080">
    <property type="entry name" value="tRNAsynth_Ia_anticodon-bd"/>
</dbReference>
<dbReference type="NCBIfam" id="TIGR00456">
    <property type="entry name" value="argS"/>
    <property type="match status" value="1"/>
</dbReference>
<dbReference type="PANTHER" id="PTHR11956:SF5">
    <property type="entry name" value="ARGININE--TRNA LIGASE, CYTOPLASMIC"/>
    <property type="match status" value="1"/>
</dbReference>
<dbReference type="PANTHER" id="PTHR11956">
    <property type="entry name" value="ARGINYL-TRNA SYNTHETASE"/>
    <property type="match status" value="1"/>
</dbReference>
<dbReference type="Pfam" id="PF03485">
    <property type="entry name" value="Arg_tRNA_synt_N"/>
    <property type="match status" value="1"/>
</dbReference>
<dbReference type="Pfam" id="PF05746">
    <property type="entry name" value="DALR_1"/>
    <property type="match status" value="1"/>
</dbReference>
<dbReference type="Pfam" id="PF00750">
    <property type="entry name" value="tRNA-synt_1d"/>
    <property type="match status" value="1"/>
</dbReference>
<dbReference type="PRINTS" id="PR01038">
    <property type="entry name" value="TRNASYNTHARG"/>
</dbReference>
<dbReference type="SMART" id="SM01016">
    <property type="entry name" value="Arg_tRNA_synt_N"/>
    <property type="match status" value="1"/>
</dbReference>
<dbReference type="SMART" id="SM00836">
    <property type="entry name" value="DALR_1"/>
    <property type="match status" value="1"/>
</dbReference>
<dbReference type="SUPFAM" id="SSF47323">
    <property type="entry name" value="Anticodon-binding domain of a subclass of class I aminoacyl-tRNA synthetases"/>
    <property type="match status" value="1"/>
</dbReference>
<dbReference type="SUPFAM" id="SSF55190">
    <property type="entry name" value="Arginyl-tRNA synthetase (ArgRS), N-terminal 'additional' domain"/>
    <property type="match status" value="1"/>
</dbReference>
<dbReference type="SUPFAM" id="SSF52374">
    <property type="entry name" value="Nucleotidylyl transferase"/>
    <property type="match status" value="1"/>
</dbReference>
<dbReference type="PROSITE" id="PS00178">
    <property type="entry name" value="AA_TRNA_LIGASE_I"/>
    <property type="match status" value="1"/>
</dbReference>
<protein>
    <recommendedName>
        <fullName>Arginine--tRNA ligase</fullName>
        <ecNumber>6.1.1.19</ecNumber>
    </recommendedName>
    <alternativeName>
        <fullName>Arginyl-tRNA synthetase</fullName>
        <shortName>ArgRS</shortName>
    </alternativeName>
</protein>
<gene>
    <name type="primary">argS</name>
    <name type="ordered locus">CT_454</name>
</gene>
<feature type="chain" id="PRO_0000151548" description="Arginine--tRNA ligase">
    <location>
        <begin position="1"/>
        <end position="563"/>
    </location>
</feature>
<feature type="short sequence motif" description="'HIGH' region">
    <location>
        <begin position="123"/>
        <end position="133"/>
    </location>
</feature>
<name>SYR_CHLTR</name>
<reference key="1">
    <citation type="journal article" date="1998" name="Science">
        <title>Genome sequence of an obligate intracellular pathogen of humans: Chlamydia trachomatis.</title>
        <authorList>
            <person name="Stephens R.S."/>
            <person name="Kalman S."/>
            <person name="Lammel C.J."/>
            <person name="Fan J."/>
            <person name="Marathe R."/>
            <person name="Aravind L."/>
            <person name="Mitchell W.P."/>
            <person name="Olinger L."/>
            <person name="Tatusov R.L."/>
            <person name="Zhao Q."/>
            <person name="Koonin E.V."/>
            <person name="Davis R.W."/>
        </authorList>
    </citation>
    <scope>NUCLEOTIDE SEQUENCE [LARGE SCALE GENOMIC DNA]</scope>
    <source>
        <strain>ATCC VR-885 / DSM 19411 / UW-3/Cx</strain>
    </source>
</reference>
<reference key="2">
    <citation type="submission" date="1998-08" db="EMBL/GenBank/DDBJ databases">
        <title>Gene identification of Chlamydia trachomatis by random DNA sequencing.</title>
        <authorList>
            <person name="Wang L."/>
            <person name="Steenburg S.D."/>
            <person name="Zheng Y."/>
            <person name="Larsen S.H."/>
        </authorList>
    </citation>
    <scope>NUCLEOTIDE SEQUENCE [GENOMIC DNA] OF 323-369</scope>
    <source>
        <strain>L2/434/Bu</strain>
    </source>
</reference>
<proteinExistence type="inferred from homology"/>
<comment type="catalytic activity">
    <reaction>
        <text>tRNA(Arg) + L-arginine + ATP = L-arginyl-tRNA(Arg) + AMP + diphosphate</text>
        <dbReference type="Rhea" id="RHEA:20301"/>
        <dbReference type="Rhea" id="RHEA-COMP:9658"/>
        <dbReference type="Rhea" id="RHEA-COMP:9673"/>
        <dbReference type="ChEBI" id="CHEBI:30616"/>
        <dbReference type="ChEBI" id="CHEBI:32682"/>
        <dbReference type="ChEBI" id="CHEBI:33019"/>
        <dbReference type="ChEBI" id="CHEBI:78442"/>
        <dbReference type="ChEBI" id="CHEBI:78513"/>
        <dbReference type="ChEBI" id="CHEBI:456215"/>
        <dbReference type="EC" id="6.1.1.19"/>
    </reaction>
</comment>
<comment type="subunit">
    <text evidence="1">Monomer.</text>
</comment>
<comment type="subcellular location">
    <subcellularLocation>
        <location evidence="1">Cytoplasm</location>
    </subcellularLocation>
</comment>
<comment type="similarity">
    <text evidence="2">Belongs to the class-I aminoacyl-tRNA synthetase family.</text>
</comment>